<comment type="function">
    <text evidence="1">Provides the (R)-glutamate required for cell wall biosynthesis.</text>
</comment>
<comment type="catalytic activity">
    <reaction evidence="1">
        <text>L-glutamate = D-glutamate</text>
        <dbReference type="Rhea" id="RHEA:12813"/>
        <dbReference type="ChEBI" id="CHEBI:29985"/>
        <dbReference type="ChEBI" id="CHEBI:29986"/>
        <dbReference type="EC" id="5.1.1.3"/>
    </reaction>
</comment>
<comment type="pathway">
    <text evidence="1">Cell wall biogenesis; peptidoglycan biosynthesis.</text>
</comment>
<comment type="similarity">
    <text evidence="1">Belongs to the aspartate/glutamate racemases family.</text>
</comment>
<name>MURI_SYMTH</name>
<protein>
    <recommendedName>
        <fullName evidence="1">Glutamate racemase</fullName>
        <ecNumber evidence="1">5.1.1.3</ecNumber>
    </recommendedName>
</protein>
<gene>
    <name evidence="1" type="primary">murI</name>
    <name type="ordered locus">STH342</name>
</gene>
<proteinExistence type="inferred from homology"/>
<feature type="chain" id="PRO_1000078581" description="Glutamate racemase">
    <location>
        <begin position="1"/>
        <end position="277"/>
    </location>
</feature>
<feature type="active site" description="Proton donor/acceptor" evidence="1">
    <location>
        <position position="79"/>
    </location>
</feature>
<feature type="active site" description="Proton donor/acceptor" evidence="1">
    <location>
        <position position="191"/>
    </location>
</feature>
<feature type="binding site" evidence="1">
    <location>
        <begin position="16"/>
        <end position="17"/>
    </location>
    <ligand>
        <name>substrate</name>
    </ligand>
</feature>
<feature type="binding site" evidence="1">
    <location>
        <begin position="48"/>
        <end position="49"/>
    </location>
    <ligand>
        <name>substrate</name>
    </ligand>
</feature>
<feature type="binding site" evidence="1">
    <location>
        <begin position="80"/>
        <end position="81"/>
    </location>
    <ligand>
        <name>substrate</name>
    </ligand>
</feature>
<feature type="binding site" evidence="1">
    <location>
        <begin position="192"/>
        <end position="193"/>
    </location>
    <ligand>
        <name>substrate</name>
    </ligand>
</feature>
<reference key="1">
    <citation type="journal article" date="2004" name="Nucleic Acids Res.">
        <title>Genome sequence of Symbiobacterium thermophilum, an uncultivable bacterium that depends on microbial commensalism.</title>
        <authorList>
            <person name="Ueda K."/>
            <person name="Yamashita A."/>
            <person name="Ishikawa J."/>
            <person name="Shimada M."/>
            <person name="Watsuji T."/>
            <person name="Morimura K."/>
            <person name="Ikeda H."/>
            <person name="Hattori M."/>
            <person name="Beppu T."/>
        </authorList>
    </citation>
    <scope>NUCLEOTIDE SEQUENCE [LARGE SCALE GENOMIC DNA]</scope>
    <source>
        <strain>DSM 24528 / JCM 14929 / IAM 14863 / T</strain>
    </source>
</reference>
<dbReference type="EC" id="5.1.1.3" evidence="1"/>
<dbReference type="EMBL" id="AP006840">
    <property type="protein sequence ID" value="BAD39327.1"/>
    <property type="molecule type" value="Genomic_DNA"/>
</dbReference>
<dbReference type="RefSeq" id="WP_011194476.1">
    <property type="nucleotide sequence ID" value="NC_006177.1"/>
</dbReference>
<dbReference type="SMR" id="Q67SL6"/>
<dbReference type="STRING" id="292459.STH342"/>
<dbReference type="KEGG" id="sth:STH342"/>
<dbReference type="eggNOG" id="COG0796">
    <property type="taxonomic scope" value="Bacteria"/>
</dbReference>
<dbReference type="HOGENOM" id="CLU_052344_1_0_9"/>
<dbReference type="OrthoDB" id="9801055at2"/>
<dbReference type="UniPathway" id="UPA00219"/>
<dbReference type="Proteomes" id="UP000000417">
    <property type="component" value="Chromosome"/>
</dbReference>
<dbReference type="GO" id="GO:0008881">
    <property type="term" value="F:glutamate racemase activity"/>
    <property type="evidence" value="ECO:0007669"/>
    <property type="project" value="UniProtKB-UniRule"/>
</dbReference>
<dbReference type="GO" id="GO:0071555">
    <property type="term" value="P:cell wall organization"/>
    <property type="evidence" value="ECO:0007669"/>
    <property type="project" value="UniProtKB-KW"/>
</dbReference>
<dbReference type="GO" id="GO:0009252">
    <property type="term" value="P:peptidoglycan biosynthetic process"/>
    <property type="evidence" value="ECO:0007669"/>
    <property type="project" value="UniProtKB-UniRule"/>
</dbReference>
<dbReference type="GO" id="GO:0008360">
    <property type="term" value="P:regulation of cell shape"/>
    <property type="evidence" value="ECO:0007669"/>
    <property type="project" value="UniProtKB-KW"/>
</dbReference>
<dbReference type="FunFam" id="3.40.50.1860:FF:000001">
    <property type="entry name" value="Glutamate racemase"/>
    <property type="match status" value="1"/>
</dbReference>
<dbReference type="Gene3D" id="3.40.50.1860">
    <property type="match status" value="2"/>
</dbReference>
<dbReference type="HAMAP" id="MF_00258">
    <property type="entry name" value="Glu_racemase"/>
    <property type="match status" value="1"/>
</dbReference>
<dbReference type="InterPro" id="IPR015942">
    <property type="entry name" value="Asp/Glu/hydantoin_racemase"/>
</dbReference>
<dbReference type="InterPro" id="IPR001920">
    <property type="entry name" value="Asp/Glu_race"/>
</dbReference>
<dbReference type="InterPro" id="IPR018187">
    <property type="entry name" value="Asp/Glu_racemase_AS_1"/>
</dbReference>
<dbReference type="InterPro" id="IPR033134">
    <property type="entry name" value="Asp/Glu_racemase_AS_2"/>
</dbReference>
<dbReference type="InterPro" id="IPR004391">
    <property type="entry name" value="Glu_race"/>
</dbReference>
<dbReference type="NCBIfam" id="TIGR00067">
    <property type="entry name" value="glut_race"/>
    <property type="match status" value="1"/>
</dbReference>
<dbReference type="PANTHER" id="PTHR21198">
    <property type="entry name" value="GLUTAMATE RACEMASE"/>
    <property type="match status" value="1"/>
</dbReference>
<dbReference type="PANTHER" id="PTHR21198:SF2">
    <property type="entry name" value="GLUTAMATE RACEMASE"/>
    <property type="match status" value="1"/>
</dbReference>
<dbReference type="Pfam" id="PF01177">
    <property type="entry name" value="Asp_Glu_race"/>
    <property type="match status" value="1"/>
</dbReference>
<dbReference type="SUPFAM" id="SSF53681">
    <property type="entry name" value="Aspartate/glutamate racemase"/>
    <property type="match status" value="2"/>
</dbReference>
<dbReference type="PROSITE" id="PS00923">
    <property type="entry name" value="ASP_GLU_RACEMASE_1"/>
    <property type="match status" value="1"/>
</dbReference>
<dbReference type="PROSITE" id="PS00924">
    <property type="entry name" value="ASP_GLU_RACEMASE_2"/>
    <property type="match status" value="1"/>
</dbReference>
<keyword id="KW-0133">Cell shape</keyword>
<keyword id="KW-0961">Cell wall biogenesis/degradation</keyword>
<keyword id="KW-0413">Isomerase</keyword>
<keyword id="KW-0573">Peptidoglycan synthesis</keyword>
<keyword id="KW-1185">Reference proteome</keyword>
<sequence>MTQYIPDTQRPIGLFDSGEGGLTVARAVADLLPQENLIYACDTAHFPYGPRPLAEVRAFFRRFMEFFVEQNCKLVIVACNTATAAAIDLLLADAFPIPALGVVQPGAAMAAEASVTGRIGVAATQGTCDSGIYPQTIRLFRPDAYVVQQACPILVIRAEEGVISGPEVRREVERCLAPILAERVDTLVLGCTHFPHMAKVIQDVVGPAVRLVDPGKATAVQVADLLRRRGLLNPGPGPGQRRAFTTGDPQRFLEVACRLWPGGVDAAAHIHLWSQQE</sequence>
<organism>
    <name type="scientific">Symbiobacterium thermophilum (strain DSM 24528 / JCM 14929 / IAM 14863 / T)</name>
    <dbReference type="NCBI Taxonomy" id="292459"/>
    <lineage>
        <taxon>Bacteria</taxon>
        <taxon>Bacillati</taxon>
        <taxon>Bacillota</taxon>
        <taxon>Clostridia</taxon>
        <taxon>Eubacteriales</taxon>
        <taxon>Symbiobacteriaceae</taxon>
        <taxon>Symbiobacterium</taxon>
    </lineage>
</organism>
<accession>Q67SL6</accession>
<evidence type="ECO:0000255" key="1">
    <source>
        <dbReference type="HAMAP-Rule" id="MF_00258"/>
    </source>
</evidence>